<reference key="1">
    <citation type="journal article" date="2007" name="PLoS Genet.">
        <title>Patterns and implications of gene gain and loss in the evolution of Prochlorococcus.</title>
        <authorList>
            <person name="Kettler G.C."/>
            <person name="Martiny A.C."/>
            <person name="Huang K."/>
            <person name="Zucker J."/>
            <person name="Coleman M.L."/>
            <person name="Rodrigue S."/>
            <person name="Chen F."/>
            <person name="Lapidus A."/>
            <person name="Ferriera S."/>
            <person name="Johnson J."/>
            <person name="Steglich C."/>
            <person name="Church G.M."/>
            <person name="Richardson P."/>
            <person name="Chisholm S.W."/>
        </authorList>
    </citation>
    <scope>NUCLEOTIDE SEQUENCE [LARGE SCALE GENOMIC DNA]</scope>
    <source>
        <strain>MIT 9303</strain>
    </source>
</reference>
<evidence type="ECO:0000255" key="1">
    <source>
        <dbReference type="HAMAP-Rule" id="MF_00293"/>
    </source>
</evidence>
<gene>
    <name evidence="1" type="primary">psbN</name>
    <name type="ordered locus">P9303_24631</name>
</gene>
<dbReference type="EMBL" id="CP000554">
    <property type="protein sequence ID" value="ABM79194.1"/>
    <property type="molecule type" value="Genomic_DNA"/>
</dbReference>
<dbReference type="RefSeq" id="WP_011827045.1">
    <property type="nucleotide sequence ID" value="NC_008820.1"/>
</dbReference>
<dbReference type="SMR" id="A2CCI4"/>
<dbReference type="STRING" id="59922.P9303_24631"/>
<dbReference type="KEGG" id="pmf:P9303_24631"/>
<dbReference type="HOGENOM" id="CLU_205504_1_0_3"/>
<dbReference type="BioCyc" id="PMAR59922:G1G80-2154-MONOMER"/>
<dbReference type="Proteomes" id="UP000002274">
    <property type="component" value="Chromosome"/>
</dbReference>
<dbReference type="GO" id="GO:0031676">
    <property type="term" value="C:plasma membrane-derived thylakoid membrane"/>
    <property type="evidence" value="ECO:0007669"/>
    <property type="project" value="UniProtKB-SubCell"/>
</dbReference>
<dbReference type="GO" id="GO:0015979">
    <property type="term" value="P:photosynthesis"/>
    <property type="evidence" value="ECO:0007669"/>
    <property type="project" value="InterPro"/>
</dbReference>
<dbReference type="HAMAP" id="MF_00293">
    <property type="entry name" value="PSII_PsbN"/>
    <property type="match status" value="1"/>
</dbReference>
<dbReference type="InterPro" id="IPR003398">
    <property type="entry name" value="PSII_PsbN"/>
</dbReference>
<dbReference type="NCBIfam" id="NF009650">
    <property type="entry name" value="PRK13183.1"/>
    <property type="match status" value="1"/>
</dbReference>
<dbReference type="PANTHER" id="PTHR35326">
    <property type="entry name" value="PROTEIN PSBN"/>
    <property type="match status" value="1"/>
</dbReference>
<dbReference type="PANTHER" id="PTHR35326:SF3">
    <property type="entry name" value="PROTEIN PSBN"/>
    <property type="match status" value="1"/>
</dbReference>
<dbReference type="Pfam" id="PF02468">
    <property type="entry name" value="PsbN"/>
    <property type="match status" value="1"/>
</dbReference>
<name>PSBN_PROM3</name>
<sequence length="47" mass="5219">MENSSSETYSLLIAMVTITFGLTGYGLYTAFGPPSKELEDPFEEHED</sequence>
<comment type="function">
    <text evidence="1">May play a role in photosystem I and II biogenesis.</text>
</comment>
<comment type="subcellular location">
    <subcellularLocation>
        <location evidence="1">Cellular thylakoid membrane</location>
        <topology evidence="1">Single-pass membrane protein</topology>
    </subcellularLocation>
</comment>
<comment type="similarity">
    <text evidence="1">Belongs to the PsbN family.</text>
</comment>
<comment type="caution">
    <text evidence="1">Originally thought to be a component of PSII; based on experiments in Synechocystis, N.tabacum and barley, and its absence from PSII in T.elongatus and T.vulcanus, this is probably not true.</text>
</comment>
<accession>A2CCI4</accession>
<feature type="chain" id="PRO_0000362169" description="Protein PsbN">
    <location>
        <begin position="1"/>
        <end position="47"/>
    </location>
</feature>
<feature type="transmembrane region" description="Helical" evidence="1">
    <location>
        <begin position="9"/>
        <end position="31"/>
    </location>
</feature>
<keyword id="KW-0472">Membrane</keyword>
<keyword id="KW-0793">Thylakoid</keyword>
<keyword id="KW-0812">Transmembrane</keyword>
<keyword id="KW-1133">Transmembrane helix</keyword>
<protein>
    <recommendedName>
        <fullName evidence="1">Protein PsbN</fullName>
    </recommendedName>
</protein>
<organism>
    <name type="scientific">Prochlorococcus marinus (strain MIT 9303)</name>
    <dbReference type="NCBI Taxonomy" id="59922"/>
    <lineage>
        <taxon>Bacteria</taxon>
        <taxon>Bacillati</taxon>
        <taxon>Cyanobacteriota</taxon>
        <taxon>Cyanophyceae</taxon>
        <taxon>Synechococcales</taxon>
        <taxon>Prochlorococcaceae</taxon>
        <taxon>Prochlorococcus</taxon>
    </lineage>
</organism>
<proteinExistence type="inferred from homology"/>